<protein>
    <recommendedName>
        <fullName evidence="2">CD302 antigen</fullName>
    </recommendedName>
    <alternativeName>
        <fullName evidence="5">Type I transmembrane C-type lectin receptor DCL-1</fullName>
    </alternativeName>
</protein>
<dbReference type="EMBL" id="DY614163">
    <property type="status" value="NOT_ANNOTATED_CDS"/>
    <property type="molecule type" value="mRNA"/>
</dbReference>
<dbReference type="EMBL" id="BK006290">
    <property type="protein sequence ID" value="DAA06086.1"/>
    <property type="molecule type" value="mRNA"/>
</dbReference>
<dbReference type="SMR" id="A8WH72"/>
<dbReference type="GlyCosmos" id="A8WH72">
    <property type="glycosylation" value="1 site, No reported glycans"/>
</dbReference>
<dbReference type="GO" id="GO:0005938">
    <property type="term" value="C:cell cortex"/>
    <property type="evidence" value="ECO:0007669"/>
    <property type="project" value="UniProtKB-SubCell"/>
</dbReference>
<dbReference type="GO" id="GO:0030175">
    <property type="term" value="C:filopodium"/>
    <property type="evidence" value="ECO:0007669"/>
    <property type="project" value="UniProtKB-SubCell"/>
</dbReference>
<dbReference type="GO" id="GO:0016020">
    <property type="term" value="C:membrane"/>
    <property type="evidence" value="ECO:0007669"/>
    <property type="project" value="UniProtKB-SubCell"/>
</dbReference>
<dbReference type="GO" id="GO:0005902">
    <property type="term" value="C:microvillus"/>
    <property type="evidence" value="ECO:0007669"/>
    <property type="project" value="UniProtKB-SubCell"/>
</dbReference>
<dbReference type="GO" id="GO:0030246">
    <property type="term" value="F:carbohydrate binding"/>
    <property type="evidence" value="ECO:0007669"/>
    <property type="project" value="UniProtKB-KW"/>
</dbReference>
<dbReference type="FunFam" id="3.10.100.10:FF:000082">
    <property type="entry name" value="CD302 antigen isoform X2"/>
    <property type="match status" value="1"/>
</dbReference>
<dbReference type="Gene3D" id="3.10.100.10">
    <property type="entry name" value="Mannose-Binding Protein A, subunit A"/>
    <property type="match status" value="1"/>
</dbReference>
<dbReference type="InterPro" id="IPR001304">
    <property type="entry name" value="C-type_lectin-like"/>
</dbReference>
<dbReference type="InterPro" id="IPR016186">
    <property type="entry name" value="C-type_lectin-like/link_sf"/>
</dbReference>
<dbReference type="InterPro" id="IPR050111">
    <property type="entry name" value="C-type_lectin/snaclec_domain"/>
</dbReference>
<dbReference type="InterPro" id="IPR016187">
    <property type="entry name" value="CTDL_fold"/>
</dbReference>
<dbReference type="PANTHER" id="PTHR22803">
    <property type="entry name" value="MANNOSE, PHOSPHOLIPASE, LECTIN RECEPTOR RELATED"/>
    <property type="match status" value="1"/>
</dbReference>
<dbReference type="Pfam" id="PF00059">
    <property type="entry name" value="Lectin_C"/>
    <property type="match status" value="1"/>
</dbReference>
<dbReference type="SMART" id="SM00034">
    <property type="entry name" value="CLECT"/>
    <property type="match status" value="1"/>
</dbReference>
<dbReference type="SUPFAM" id="SSF56436">
    <property type="entry name" value="C-type lectin-like"/>
    <property type="match status" value="1"/>
</dbReference>
<dbReference type="PROSITE" id="PS50041">
    <property type="entry name" value="C_TYPE_LECTIN_2"/>
    <property type="match status" value="1"/>
</dbReference>
<keyword id="KW-0966">Cell projection</keyword>
<keyword id="KW-0963">Cytoplasm</keyword>
<keyword id="KW-1015">Disulfide bond</keyword>
<keyword id="KW-0325">Glycoprotein</keyword>
<keyword id="KW-0430">Lectin</keyword>
<keyword id="KW-0472">Membrane</keyword>
<keyword id="KW-0675">Receptor</keyword>
<keyword id="KW-0732">Signal</keyword>
<keyword id="KW-0812">Transmembrane</keyword>
<keyword id="KW-1133">Transmembrane helix</keyword>
<evidence type="ECO:0000250" key="1">
    <source>
        <dbReference type="UniProtKB" id="Q5KU26"/>
    </source>
</evidence>
<evidence type="ECO:0000250" key="2">
    <source>
        <dbReference type="UniProtKB" id="Q8IX05"/>
    </source>
</evidence>
<evidence type="ECO:0000255" key="3"/>
<evidence type="ECO:0000255" key="4">
    <source>
        <dbReference type="PROSITE-ProRule" id="PRU00040"/>
    </source>
</evidence>
<evidence type="ECO:0000303" key="5">
    <source>
    </source>
</evidence>
<evidence type="ECO:0000305" key="6"/>
<evidence type="ECO:0000312" key="7">
    <source>
        <dbReference type="EMBL" id="DAA06086.1"/>
    </source>
</evidence>
<reference evidence="6" key="1">
    <citation type="submission" date="2006-03" db="EMBL/GenBank/DDBJ databases">
        <authorList>
            <person name="Crawford A.M."/>
            <person name="Lee N.H."/>
            <person name="McCulloch A."/>
        </authorList>
    </citation>
    <scope>NUCLEOTIDE SEQUENCE [LARGE SCALE MRNA]</scope>
</reference>
<reference evidence="6 7" key="2">
    <citation type="journal article" date="2007" name="J. Immunol.">
        <title>The novel endocytic and phagocytic C-Type lectin receptor DCL-1/CD302 on macrophages is colocalized with F-actin, suggesting a role in cell adhesion and migration.</title>
        <authorList>
            <person name="Kato M."/>
            <person name="Khan S."/>
            <person name="d'Aniello E."/>
            <person name="McDonald K.J."/>
            <person name="Hart D.N."/>
        </authorList>
    </citation>
    <scope>IDENTIFICATION</scope>
</reference>
<feature type="signal peptide" evidence="3">
    <location>
        <begin position="1"/>
        <end position="21"/>
    </location>
</feature>
<feature type="chain" id="PRO_0000413656" description="CD302 antigen" evidence="3">
    <location>
        <begin position="22"/>
        <end position="231"/>
    </location>
</feature>
<feature type="topological domain" description="Extracellular" evidence="3">
    <location>
        <begin position="22"/>
        <end position="169"/>
    </location>
</feature>
<feature type="transmembrane region" description="Helical" evidence="3">
    <location>
        <begin position="170"/>
        <end position="190"/>
    </location>
</feature>
<feature type="topological domain" description="Cytoplasmic" evidence="3">
    <location>
        <begin position="191"/>
        <end position="231"/>
    </location>
</feature>
<feature type="domain" description="C-type lectin" evidence="4">
    <location>
        <begin position="31"/>
        <end position="153"/>
    </location>
</feature>
<feature type="glycosylation site" description="N-linked (GlcNAc...) asparagine" evidence="3">
    <location>
        <position position="110"/>
    </location>
</feature>
<feature type="disulfide bond" evidence="1 4">
    <location>
        <begin position="129"/>
        <end position="144"/>
    </location>
</feature>
<organism>
    <name type="scientific">Trichosurus vulpecula</name>
    <name type="common">Brush-tailed possum</name>
    <dbReference type="NCBI Taxonomy" id="9337"/>
    <lineage>
        <taxon>Eukaryota</taxon>
        <taxon>Metazoa</taxon>
        <taxon>Chordata</taxon>
        <taxon>Craniata</taxon>
        <taxon>Vertebrata</taxon>
        <taxon>Euteleostomi</taxon>
        <taxon>Mammalia</taxon>
        <taxon>Metatheria</taxon>
        <taxon>Diprotodontia</taxon>
        <taxon>Phalangeridae</taxon>
        <taxon>Trichosurus</taxon>
    </lineage>
</organism>
<comment type="function">
    <text evidence="2">Potential multifunctional C-type lectin receptor that may play roles in endocytosis and phagocytosis as well as in cell adhesion and migration.</text>
</comment>
<comment type="subcellular location">
    <subcellularLocation>
        <location evidence="3">Membrane</location>
        <topology evidence="3">Single-pass type I membrane protein</topology>
    </subcellularLocation>
    <subcellularLocation>
        <location evidence="2 3">Cell projection</location>
        <location evidence="2 3">Filopodium</location>
    </subcellularLocation>
    <subcellularLocation>
        <location evidence="2 3">Cytoplasm</location>
        <location evidence="2 3">Cell cortex</location>
    </subcellularLocation>
    <subcellularLocation>
        <location evidence="2 3">Cell projection</location>
        <location evidence="2 3">Microvillus</location>
    </subcellularLocation>
    <text evidence="2 3">Colocalizes with F-actin in filopodia, cellular cortex and microvilli of the apical cell surface.</text>
</comment>
<accession>A8WH72</accession>
<sequence>MSAAVVATLPTLLLLLGLAAADCPSSSWVQFQSNCYIFLQTTVKIENIEDVRNQCTDSASGADMISIHNEEENAFILETFKKRWKAQDDILLGMFYDTDDESFKWYDKSNMTFNKWKNSEESQDLIDTCGFLQPKSGIWKKGNCEVSSVEGALCKAAVSYEKKYLPDHHILITALVIASTTILTITGAVVWFLYKRNLTSGLTNTAYTTAPQLPYNDDCILVDAEENEYVA</sequence>
<name>CD302_TRIVU</name>
<gene>
    <name evidence="2" type="primary">CD302</name>
</gene>
<proteinExistence type="evidence at transcript level"/>